<evidence type="ECO:0000250" key="1"/>
<evidence type="ECO:0000256" key="2">
    <source>
        <dbReference type="SAM" id="MobiDB-lite"/>
    </source>
</evidence>
<evidence type="ECO:0000305" key="3"/>
<feature type="chain" id="PRO_0000427545" description="Antitoxin VapB43">
    <location>
        <begin position="1"/>
        <end position="85"/>
    </location>
</feature>
<feature type="region of interest" description="Disordered" evidence="2">
    <location>
        <begin position="37"/>
        <end position="60"/>
    </location>
</feature>
<sequence length="85" mass="9045">MRTTIRIDDELYREVKAKAARSGRTVAAVLEDAVRRGLNPPKPQAAGRYRVQPSGKGGLRPGVDLSSNAALAEAMNDGVSVDAVR</sequence>
<keyword id="KW-1185">Reference proteome</keyword>
<keyword id="KW-1277">Toxin-antitoxin system</keyword>
<organism>
    <name type="scientific">Mycobacterium tuberculosis (strain CDC 1551 / Oshkosh)</name>
    <dbReference type="NCBI Taxonomy" id="83331"/>
    <lineage>
        <taxon>Bacteria</taxon>
        <taxon>Bacillati</taxon>
        <taxon>Actinomycetota</taxon>
        <taxon>Actinomycetes</taxon>
        <taxon>Mycobacteriales</taxon>
        <taxon>Mycobacteriaceae</taxon>
        <taxon>Mycobacterium</taxon>
        <taxon>Mycobacterium tuberculosis complex</taxon>
    </lineage>
</organism>
<comment type="function">
    <text evidence="1">Antitoxin component of a type II toxin-antitoxin (TA) system.</text>
</comment>
<comment type="sequence caution" evidence="3">
    <conflict type="frameshift">
        <sequence resource="EMBL" id="AE000516"/>
    </conflict>
</comment>
<reference key="1">
    <citation type="journal article" date="2002" name="J. Bacteriol.">
        <title>Whole-genome comparison of Mycobacterium tuberculosis clinical and laboratory strains.</title>
        <authorList>
            <person name="Fleischmann R.D."/>
            <person name="Alland D."/>
            <person name="Eisen J.A."/>
            <person name="Carpenter L."/>
            <person name="White O."/>
            <person name="Peterson J.D."/>
            <person name="DeBoy R.T."/>
            <person name="Dodson R.J."/>
            <person name="Gwinn M.L."/>
            <person name="Haft D.H."/>
            <person name="Hickey E.K."/>
            <person name="Kolonay J.F."/>
            <person name="Nelson W.C."/>
            <person name="Umayam L.A."/>
            <person name="Ermolaeva M.D."/>
            <person name="Salzberg S.L."/>
            <person name="Delcher A."/>
            <person name="Utterback T.R."/>
            <person name="Weidman J.F."/>
            <person name="Khouri H.M."/>
            <person name="Gill J."/>
            <person name="Mikula A."/>
            <person name="Bishai W."/>
            <person name="Jacobs W.R. Jr."/>
            <person name="Venter J.C."/>
            <person name="Fraser C.M."/>
        </authorList>
    </citation>
    <scope>NUCLEOTIDE SEQUENCE [LARGE SCALE GENOMIC DNA]</scope>
    <source>
        <strain>CDC 1551 / Oshkosh</strain>
    </source>
</reference>
<proteinExistence type="inferred from homology"/>
<name>VPB43_MYCTO</name>
<accession>P9WL40</accession>
<accession>L0TDL7</accession>
<accession>P0A5G9</accession>
<accession>Q10799</accession>
<gene>
    <name type="primary">vapB43</name>
    <name type="ordered locus">MT2938.1</name>
</gene>
<protein>
    <recommendedName>
        <fullName>Antitoxin VapB43</fullName>
    </recommendedName>
</protein>
<dbReference type="EMBL" id="AE000516">
    <property type="status" value="NOT_ANNOTATED_CDS"/>
    <property type="molecule type" value="Genomic_DNA"/>
</dbReference>
<dbReference type="PIR" id="B70923">
    <property type="entry name" value="B70923"/>
</dbReference>
<dbReference type="RefSeq" id="WP_003414620.1">
    <property type="nucleotide sequence ID" value="NZ_KK341227.1"/>
</dbReference>
<dbReference type="SMR" id="P9WL40"/>
<dbReference type="PATRIC" id="fig|83331.31.peg.3174"/>
<dbReference type="Proteomes" id="UP000001020">
    <property type="component" value="Chromosome"/>
</dbReference>
<dbReference type="GO" id="GO:0006355">
    <property type="term" value="P:regulation of DNA-templated transcription"/>
    <property type="evidence" value="ECO:0007669"/>
    <property type="project" value="InterPro"/>
</dbReference>
<dbReference type="CDD" id="cd21631">
    <property type="entry name" value="RHH_CopG_NikR-like"/>
    <property type="match status" value="1"/>
</dbReference>
<dbReference type="InterPro" id="IPR002145">
    <property type="entry name" value="CopG"/>
</dbReference>
<dbReference type="InterPro" id="IPR010985">
    <property type="entry name" value="Ribbon_hlx_hlx"/>
</dbReference>
<dbReference type="Pfam" id="PF01402">
    <property type="entry name" value="RHH_1"/>
    <property type="match status" value="1"/>
</dbReference>
<dbReference type="SUPFAM" id="SSF47598">
    <property type="entry name" value="Ribbon-helix-helix"/>
    <property type="match status" value="1"/>
</dbReference>